<accession>P56703</accession>
<accession>Q2M237</accession>
<accession>Q9H1J9</accession>
<sequence>MEPHLLGLLLGLLLGGTRVLAGYPIWWSLALGQQYTSLGSQPLLCGSIPGLVPKQLRFCRNYIEIMPSVAEGVKLGIQECQHQFRGRRWNCTTIDDSLAIFGPVLDKATRESAFVHAIASAGVAFAVTRSCAEGTSTICGCDSHHKGPPGEGWKWGGCSEDADFGVLVSREFADARENRPDARSAMNKHNNEAGRTTILDHMHLKCKCHGLSGSCEVKTCWWAQPDFRAIGDFLKDKYDSASEMVVEKHRESRGWVETLRAKYSLFKPPTERDLVYYENSPNFCEPNPETGSFGTRDRTCNVTSHGIDGCDLLCCGRGHNTRTEKRKEKCHCIFHWCCYVSCQECIRIYDVHTCK</sequence>
<reference key="1">
    <citation type="submission" date="2000-08" db="EMBL/GenBank/DDBJ databases">
        <title>Molecular cloning and characterization of six novel human WNT genes.</title>
        <authorList>
            <person name="Testa T.T."/>
            <person name="Mossakowska D.E."/>
            <person name="Carter P.S."/>
            <person name="Hu E."/>
            <person name="Zhu Y."/>
            <person name="Kelsell D.P."/>
            <person name="Murdock P.R."/>
            <person name="Herrity N.C."/>
            <person name="Lewis C.J."/>
            <person name="Cross D.A."/>
            <person name="Culbert A.A."/>
            <person name="Reith A.D."/>
            <person name="Barnes M.R."/>
        </authorList>
    </citation>
    <scope>NUCLEOTIDE SEQUENCE [MRNA]</scope>
</reference>
<reference key="2">
    <citation type="journal article" date="2001" name="Int. J. Oncol.">
        <title>Molecular cloning and characterization of human WNT3.</title>
        <authorList>
            <person name="Katoh M."/>
        </authorList>
    </citation>
    <scope>NUCLEOTIDE SEQUENCE [MRNA]</scope>
</reference>
<reference key="3">
    <citation type="journal article" date="2004" name="Genome Res.">
        <title>The status, quality, and expansion of the NIH full-length cDNA project: the Mammalian Gene Collection (MGC).</title>
        <authorList>
            <consortium name="The MGC Project Team"/>
        </authorList>
    </citation>
    <scope>NUCLEOTIDE SEQUENCE [LARGE SCALE MRNA]</scope>
</reference>
<reference key="4">
    <citation type="journal article" date="1993" name="Genomics">
        <title>Molecular cloning and chromosomal localization to 17q21 of the human WNT3 gene.</title>
        <authorList>
            <person name="Roelink H."/>
            <person name="Wang J."/>
            <person name="Black D.M."/>
            <person name="Solomon E."/>
            <person name="Nusse R."/>
        </authorList>
    </citation>
    <scope>NUCLEOTIDE SEQUENCE [MRNA] OF 1-333</scope>
</reference>
<reference key="5">
    <citation type="journal article" date="2004" name="Am. J. Hum. Genet.">
        <title>Homozygous WNT3 mutation causes tetra-amelia in a large consanguineous family.</title>
        <authorList>
            <person name="Niemann S."/>
            <person name="Zhao C."/>
            <person name="Pascu F."/>
            <person name="Stahl U."/>
            <person name="Aulepp U."/>
            <person name="Niswander L."/>
            <person name="Weber J.L."/>
            <person name="Mueller U."/>
        </authorList>
    </citation>
    <scope>INVOLVEMENT IN TETAMS1</scope>
</reference>
<reference key="6">
    <citation type="journal article" date="2016" name="Elife">
        <title>Active and water-soluble form of lipidated Wnt protein is maintained by a serum glycoprotein afamin/alpha-albumin.</title>
        <authorList>
            <person name="Mihara E."/>
            <person name="Hirai H."/>
            <person name="Yamamoto H."/>
            <person name="Tamura-Kawakami K."/>
            <person name="Matano M."/>
            <person name="Kikuchi A."/>
            <person name="Sato T."/>
            <person name="Takagi J."/>
        </authorList>
    </citation>
    <scope>INTERACTION WITH AFM</scope>
    <scope>FUNCTION</scope>
    <scope>SUBCELLULAR LOCATION</scope>
</reference>
<protein>
    <recommendedName>
        <fullName>Proto-oncogene Wnt-3</fullName>
    </recommendedName>
    <alternativeName>
        <fullName>Proto-oncogene Int-4 homolog</fullName>
    </alternativeName>
</protein>
<proteinExistence type="evidence at protein level"/>
<comment type="function">
    <text evidence="2 7 8 9">Ligand for members of the frizzled family of seven transmembrane receptors (Probable). Functions in the canonical Wnt signaling pathway that results in activation of transcription factors of the TCF/LEF family (PubMed:26902720). Required for normal gastrulation, formation of the primitive streak, and for the formation of the mesoderm during early embryogenesis. Required for normal formation of the apical ectodermal ridge (By similarity). Required for normal embryonic development, and especially for limb development (PubMed:14872406).</text>
</comment>
<comment type="subunit">
    <text evidence="1">Forms a soluble 1:1 complex with AFM; this prevents oligomerization and is required for prolonged biological activity (PubMed:26902720). The complex with AFM may represent the physiological form in body fluids (PubMed:26902720). Interacts with PORCN. Interacts with WLS (By similarity).</text>
</comment>
<comment type="interaction">
    <interactant intactId="EBI-3644922">
        <id>P56703</id>
    </interactant>
    <interactant intactId="EBI-20737924">
        <id>P43652</id>
        <label>AFM</label>
    </interactant>
    <organismsDiffer>false</organismsDiffer>
    <experiments>3</experiments>
</comment>
<comment type="interaction">
    <interactant intactId="EBI-3644922">
        <id>P56703</id>
    </interactant>
    <interactant intactId="EBI-746917">
        <id>O75084</id>
        <label>FZD7</label>
    </interactant>
    <organismsDiffer>false</organismsDiffer>
    <experiments>3</experiments>
</comment>
<comment type="interaction">
    <interactant intactId="EBI-3644922">
        <id>P56703</id>
    </interactant>
    <interactant intactId="EBI-6171689">
        <id>Q61091</id>
        <label>Fzd8</label>
    </interactant>
    <organismsDiffer>true</organismsDiffer>
    <experiments>2</experiments>
</comment>
<comment type="subcellular location">
    <subcellularLocation>
        <location evidence="9">Secreted</location>
        <location evidence="9">Extracellular space</location>
        <location evidence="9">Extracellular matrix</location>
    </subcellularLocation>
    <subcellularLocation>
        <location evidence="8">Secreted</location>
    </subcellularLocation>
</comment>
<comment type="PTM">
    <text evidence="3 5">Palmitoleoylation is required for efficient binding to frizzled receptors. Depalmitoleoylation leads to Wnt signaling pathway inhibition.</text>
</comment>
<comment type="disease" evidence="7">
    <disease id="DI-01262">
        <name>Tetraamelia syndrome 1</name>
        <acronym>TETAMS1</acronym>
        <description>A form of tetraamelia, a rare disease characterized by rudimentary appendages or complete absence of all four limbs, and other anomalies such as craniofacial, nervous system, pulmonary, skeletal and urogenital defects. TETAMS1 patients manifest complete limb agenesis without defects of scapulae or clavicles. Other features include bilateral cleft lip/palate, diaphragmatic defect with bilobar right lung, renal and adrenal agenesis, pelvic hypoplasia, and urogenital defects. TETAMS1 transmission pattern is consistent with autosomal recessive inheritance.</description>
        <dbReference type="MIM" id="273395"/>
    </disease>
    <text>The disease is caused by variants affecting the gene represented in this entry.</text>
</comment>
<comment type="similarity">
    <text evidence="9">Belongs to the Wnt family.</text>
</comment>
<name>WNT3_HUMAN</name>
<gene>
    <name type="primary">WNT3</name>
    <name type="synonym">INT4</name>
</gene>
<keyword id="KW-0002">3D-structure</keyword>
<keyword id="KW-0217">Developmental protein</keyword>
<keyword id="KW-1015">Disulfide bond</keyword>
<keyword id="KW-0272">Extracellular matrix</keyword>
<keyword id="KW-0325">Glycoprotein</keyword>
<keyword id="KW-0449">Lipoprotein</keyword>
<keyword id="KW-1267">Proteomics identification</keyword>
<keyword id="KW-0656">Proto-oncogene</keyword>
<keyword id="KW-1185">Reference proteome</keyword>
<keyword id="KW-0964">Secreted</keyword>
<keyword id="KW-0732">Signal</keyword>
<keyword id="KW-0879">Wnt signaling pathway</keyword>
<evidence type="ECO:0000250" key="1"/>
<evidence type="ECO:0000250" key="2">
    <source>
        <dbReference type="UniProtKB" id="P17553"/>
    </source>
</evidence>
<evidence type="ECO:0000250" key="3">
    <source>
        <dbReference type="UniProtKB" id="P27467"/>
    </source>
</evidence>
<evidence type="ECO:0000250" key="4">
    <source>
        <dbReference type="UniProtKB" id="P28026"/>
    </source>
</evidence>
<evidence type="ECO:0000250" key="5">
    <source>
        <dbReference type="UniProtKB" id="P56704"/>
    </source>
</evidence>
<evidence type="ECO:0000255" key="6"/>
<evidence type="ECO:0000269" key="7">
    <source>
    </source>
</evidence>
<evidence type="ECO:0000269" key="8">
    <source>
    </source>
</evidence>
<evidence type="ECO:0000305" key="9"/>
<evidence type="ECO:0007829" key="10">
    <source>
        <dbReference type="PDB" id="6AHY"/>
    </source>
</evidence>
<organism>
    <name type="scientific">Homo sapiens</name>
    <name type="common">Human</name>
    <dbReference type="NCBI Taxonomy" id="9606"/>
    <lineage>
        <taxon>Eukaryota</taxon>
        <taxon>Metazoa</taxon>
        <taxon>Chordata</taxon>
        <taxon>Craniata</taxon>
        <taxon>Vertebrata</taxon>
        <taxon>Euteleostomi</taxon>
        <taxon>Mammalia</taxon>
        <taxon>Eutheria</taxon>
        <taxon>Euarchontoglires</taxon>
        <taxon>Primates</taxon>
        <taxon>Haplorrhini</taxon>
        <taxon>Catarrhini</taxon>
        <taxon>Hominidae</taxon>
        <taxon>Homo</taxon>
    </lineage>
</organism>
<feature type="signal peptide" evidence="6">
    <location>
        <begin position="1"/>
        <end position="21"/>
    </location>
</feature>
<feature type="chain" id="PRO_0000041416" description="Proto-oncogene Wnt-3">
    <location>
        <begin position="22"/>
        <end position="355"/>
    </location>
</feature>
<feature type="lipid moiety-binding region" description="O-palmitoleoyl serine; by PORCN" evidence="5">
    <location>
        <position position="212"/>
    </location>
</feature>
<feature type="glycosylation site" description="N-linked (GlcNAc...) asparagine" evidence="6">
    <location>
        <position position="90"/>
    </location>
</feature>
<feature type="glycosylation site" description="N-linked (GlcNAc...) asparagine" evidence="6">
    <location>
        <position position="301"/>
    </location>
</feature>
<feature type="disulfide bond" evidence="4">
    <location>
        <begin position="80"/>
        <end position="91"/>
    </location>
</feature>
<feature type="disulfide bond" evidence="4">
    <location>
        <begin position="131"/>
        <end position="139"/>
    </location>
</feature>
<feature type="disulfide bond" evidence="4">
    <location>
        <begin position="141"/>
        <end position="158"/>
    </location>
</feature>
<feature type="disulfide bond" evidence="4">
    <location>
        <begin position="206"/>
        <end position="220"/>
    </location>
</feature>
<feature type="disulfide bond" evidence="4">
    <location>
        <begin position="208"/>
        <end position="215"/>
    </location>
</feature>
<feature type="disulfide bond" evidence="4">
    <location>
        <begin position="284"/>
        <end position="315"/>
    </location>
</feature>
<feature type="disulfide bond" evidence="4">
    <location>
        <begin position="300"/>
        <end position="310"/>
    </location>
</feature>
<feature type="disulfide bond" evidence="4">
    <location>
        <begin position="314"/>
        <end position="354"/>
    </location>
</feature>
<feature type="disulfide bond" evidence="4">
    <location>
        <begin position="330"/>
        <end position="345"/>
    </location>
</feature>
<feature type="disulfide bond" evidence="4">
    <location>
        <begin position="332"/>
        <end position="342"/>
    </location>
</feature>
<feature type="disulfide bond" evidence="4">
    <location>
        <begin position="337"/>
        <end position="338"/>
    </location>
</feature>
<feature type="helix" evidence="10">
    <location>
        <begin position="53"/>
        <end position="61"/>
    </location>
</feature>
<feature type="helix" evidence="10">
    <location>
        <begin position="63"/>
        <end position="65"/>
    </location>
</feature>
<feature type="helix" evidence="10">
    <location>
        <begin position="66"/>
        <end position="83"/>
    </location>
</feature>
<feature type="turn" evidence="10">
    <location>
        <begin position="84"/>
        <end position="86"/>
    </location>
</feature>
<feature type="strand" evidence="10">
    <location>
        <begin position="87"/>
        <end position="89"/>
    </location>
</feature>
<feature type="helix" evidence="10">
    <location>
        <begin position="98"/>
        <end position="100"/>
    </location>
</feature>
<feature type="helix" evidence="10">
    <location>
        <begin position="110"/>
        <end position="132"/>
    </location>
</feature>
<feature type="strand" evidence="10">
    <location>
        <begin position="153"/>
        <end position="155"/>
    </location>
</feature>
<feature type="helix" evidence="10">
    <location>
        <begin position="162"/>
        <end position="174"/>
    </location>
</feature>
<feature type="helix" evidence="10">
    <location>
        <begin position="182"/>
        <end position="200"/>
    </location>
</feature>
<feature type="strand" evidence="10">
    <location>
        <begin position="203"/>
        <end position="210"/>
    </location>
</feature>
<feature type="helix" evidence="10">
    <location>
        <begin position="211"/>
        <end position="213"/>
    </location>
</feature>
<feature type="strand" evidence="10">
    <location>
        <begin position="217"/>
        <end position="223"/>
    </location>
</feature>
<feature type="helix" evidence="10">
    <location>
        <begin position="227"/>
        <end position="239"/>
    </location>
</feature>
<feature type="strand" evidence="10">
    <location>
        <begin position="242"/>
        <end position="251"/>
    </location>
</feature>
<feature type="strand" evidence="10">
    <location>
        <begin position="254"/>
        <end position="261"/>
    </location>
</feature>
<feature type="strand" evidence="10">
    <location>
        <begin position="299"/>
        <end position="303"/>
    </location>
</feature>
<feature type="turn" evidence="10">
    <location>
        <begin position="310"/>
        <end position="316"/>
    </location>
</feature>
<feature type="strand" evidence="10">
    <location>
        <begin position="319"/>
        <end position="329"/>
    </location>
</feature>
<feature type="strand" evidence="10">
    <location>
        <begin position="333"/>
        <end position="335"/>
    </location>
</feature>
<feature type="turn" evidence="10">
    <location>
        <begin position="336"/>
        <end position="338"/>
    </location>
</feature>
<feature type="strand" evidence="10">
    <location>
        <begin position="339"/>
        <end position="341"/>
    </location>
</feature>
<feature type="strand" evidence="10">
    <location>
        <begin position="344"/>
        <end position="355"/>
    </location>
</feature>
<dbReference type="EMBL" id="AY009397">
    <property type="protein sequence ID" value="AAG38657.1"/>
    <property type="molecule type" value="mRNA"/>
</dbReference>
<dbReference type="EMBL" id="AB067628">
    <property type="protein sequence ID" value="BAB70502.1"/>
    <property type="molecule type" value="mRNA"/>
</dbReference>
<dbReference type="EMBL" id="BC112116">
    <property type="protein sequence ID" value="AAI12117.1"/>
    <property type="molecule type" value="mRNA"/>
</dbReference>
<dbReference type="EMBL" id="BC112118">
    <property type="protein sequence ID" value="AAI12119.1"/>
    <property type="molecule type" value="mRNA"/>
</dbReference>
<dbReference type="EMBL" id="BC114219">
    <property type="protein sequence ID" value="AAI14220.1"/>
    <property type="molecule type" value="mRNA"/>
</dbReference>
<dbReference type="CCDS" id="CCDS11505.1"/>
<dbReference type="PIR" id="A47536">
    <property type="entry name" value="A47536"/>
</dbReference>
<dbReference type="RefSeq" id="NP_110380.1">
    <property type="nucleotide sequence ID" value="NM_030753.5"/>
</dbReference>
<dbReference type="PDB" id="6AHY">
    <property type="method" value="X-ray"/>
    <property type="resolution" value="2.80 A"/>
    <property type="chains" value="B/D/F=42-355"/>
</dbReference>
<dbReference type="PDBsum" id="6AHY"/>
<dbReference type="SMR" id="P56703"/>
<dbReference type="BioGRID" id="113310">
    <property type="interactions" value="62"/>
</dbReference>
<dbReference type="FunCoup" id="P56703">
    <property type="interactions" value="510"/>
</dbReference>
<dbReference type="IntAct" id="P56703">
    <property type="interactions" value="7"/>
</dbReference>
<dbReference type="STRING" id="9606.ENSP00000225512"/>
<dbReference type="BindingDB" id="P56703"/>
<dbReference type="ChEMBL" id="CHEMBL6079"/>
<dbReference type="GlyCosmos" id="P56703">
    <property type="glycosylation" value="2 sites, No reported glycans"/>
</dbReference>
<dbReference type="GlyGen" id="P56703">
    <property type="glycosylation" value="3 sites, 1 N-linked glycan (1 site)"/>
</dbReference>
<dbReference type="iPTMnet" id="P56703"/>
<dbReference type="PhosphoSitePlus" id="P56703"/>
<dbReference type="BioMuta" id="WNT3"/>
<dbReference type="DMDM" id="14424477"/>
<dbReference type="MassIVE" id="P56703"/>
<dbReference type="PaxDb" id="9606-ENSP00000225512"/>
<dbReference type="PeptideAtlas" id="P56703"/>
<dbReference type="ProteomicsDB" id="56936"/>
<dbReference type="Antibodypedia" id="30108">
    <property type="antibodies" value="457 antibodies from 30 providers"/>
</dbReference>
<dbReference type="DNASU" id="7473"/>
<dbReference type="Ensembl" id="ENST00000225512.6">
    <property type="protein sequence ID" value="ENSP00000225512.5"/>
    <property type="gene ID" value="ENSG00000108379.11"/>
</dbReference>
<dbReference type="Ensembl" id="ENST00000611547.1">
    <property type="protein sequence ID" value="ENSP00000478327.1"/>
    <property type="gene ID" value="ENSG00000277626.1"/>
</dbReference>
<dbReference type="Ensembl" id="ENST00000616347.2">
    <property type="protein sequence ID" value="ENSP00000480990.1"/>
    <property type="gene ID" value="ENSG00000277641.2"/>
</dbReference>
<dbReference type="GeneID" id="7473"/>
<dbReference type="KEGG" id="hsa:7473"/>
<dbReference type="MANE-Select" id="ENST00000225512.6">
    <property type="protein sequence ID" value="ENSP00000225512.5"/>
    <property type="RefSeq nucleotide sequence ID" value="NM_030753.5"/>
    <property type="RefSeq protein sequence ID" value="NP_110380.1"/>
</dbReference>
<dbReference type="UCSC" id="uc002ikv.3">
    <property type="organism name" value="human"/>
</dbReference>
<dbReference type="AGR" id="HGNC:12782"/>
<dbReference type="CTD" id="7473"/>
<dbReference type="DisGeNET" id="7473"/>
<dbReference type="GeneCards" id="WNT3"/>
<dbReference type="HGNC" id="HGNC:12782">
    <property type="gene designation" value="WNT3"/>
</dbReference>
<dbReference type="HPA" id="ENSG00000108379">
    <property type="expression patterns" value="Group enriched (liver, skin)"/>
</dbReference>
<dbReference type="MalaCards" id="WNT3"/>
<dbReference type="MIM" id="165330">
    <property type="type" value="gene"/>
</dbReference>
<dbReference type="MIM" id="273395">
    <property type="type" value="phenotype"/>
</dbReference>
<dbReference type="neXtProt" id="NX_P56703"/>
<dbReference type="NIAGADS" id="ENSG00000108379"/>
<dbReference type="OpenTargets" id="ENSG00000108379"/>
<dbReference type="Orphanet" id="3301">
    <property type="disease" value="Tetraamelia-multiple malformations syndrome"/>
</dbReference>
<dbReference type="PharmGKB" id="PA37383"/>
<dbReference type="VEuPathDB" id="HostDB:ENSG00000108379"/>
<dbReference type="eggNOG" id="KOG3913">
    <property type="taxonomic scope" value="Eukaryota"/>
</dbReference>
<dbReference type="GeneTree" id="ENSGT00940000157854"/>
<dbReference type="HOGENOM" id="CLU_033039_1_0_1"/>
<dbReference type="InParanoid" id="P56703"/>
<dbReference type="OMA" id="WNCTTIE"/>
<dbReference type="OrthoDB" id="5945655at2759"/>
<dbReference type="PAN-GO" id="P56703">
    <property type="GO annotations" value="6 GO annotations based on evolutionary models"/>
</dbReference>
<dbReference type="PhylomeDB" id="P56703"/>
<dbReference type="TreeFam" id="TF105310"/>
<dbReference type="PathwayCommons" id="P56703"/>
<dbReference type="Reactome" id="R-HSA-201681">
    <property type="pathway name" value="TCF dependent signaling in response to WNT"/>
</dbReference>
<dbReference type="Reactome" id="R-HSA-3238698">
    <property type="pathway name" value="WNT ligand biogenesis and trafficking"/>
</dbReference>
<dbReference type="Reactome" id="R-HSA-373080">
    <property type="pathway name" value="Class B/2 (Secretin family receptors)"/>
</dbReference>
<dbReference type="SignaLink" id="P56703"/>
<dbReference type="SIGNOR" id="P56703"/>
<dbReference type="BioGRID-ORCS" id="7473">
    <property type="hits" value="16 hits in 1155 CRISPR screens"/>
</dbReference>
<dbReference type="ChiTaRS" id="WNT3">
    <property type="organism name" value="human"/>
</dbReference>
<dbReference type="GeneWiki" id="WNT3"/>
<dbReference type="GenomeRNAi" id="7473"/>
<dbReference type="Pharos" id="P56703">
    <property type="development level" value="Tchem"/>
</dbReference>
<dbReference type="PRO" id="PR:P56703"/>
<dbReference type="Proteomes" id="UP000005640">
    <property type="component" value="Chromosome 17"/>
</dbReference>
<dbReference type="RNAct" id="P56703">
    <property type="molecule type" value="protein"/>
</dbReference>
<dbReference type="Bgee" id="ENSG00000108379">
    <property type="expression patterns" value="Expressed in skin of abdomen and 92 other cell types or tissues"/>
</dbReference>
<dbReference type="GO" id="GO:0030666">
    <property type="term" value="C:endocytic vesicle membrane"/>
    <property type="evidence" value="ECO:0000304"/>
    <property type="project" value="Reactome"/>
</dbReference>
<dbReference type="GO" id="GO:0005788">
    <property type="term" value="C:endoplasmic reticulum lumen"/>
    <property type="evidence" value="ECO:0000304"/>
    <property type="project" value="Reactome"/>
</dbReference>
<dbReference type="GO" id="GO:0070062">
    <property type="term" value="C:extracellular exosome"/>
    <property type="evidence" value="ECO:0000304"/>
    <property type="project" value="Reactome"/>
</dbReference>
<dbReference type="GO" id="GO:0031012">
    <property type="term" value="C:extracellular matrix"/>
    <property type="evidence" value="ECO:0007669"/>
    <property type="project" value="Ensembl"/>
</dbReference>
<dbReference type="GO" id="GO:0005576">
    <property type="term" value="C:extracellular region"/>
    <property type="evidence" value="ECO:0000304"/>
    <property type="project" value="Reactome"/>
</dbReference>
<dbReference type="GO" id="GO:0005615">
    <property type="term" value="C:extracellular space"/>
    <property type="evidence" value="ECO:0000318"/>
    <property type="project" value="GO_Central"/>
</dbReference>
<dbReference type="GO" id="GO:0005796">
    <property type="term" value="C:Golgi lumen"/>
    <property type="evidence" value="ECO:0000304"/>
    <property type="project" value="Reactome"/>
</dbReference>
<dbReference type="GO" id="GO:0005886">
    <property type="term" value="C:plasma membrane"/>
    <property type="evidence" value="ECO:0000304"/>
    <property type="project" value="Reactome"/>
</dbReference>
<dbReference type="GO" id="GO:1990909">
    <property type="term" value="C:Wnt signalosome"/>
    <property type="evidence" value="ECO:0000303"/>
    <property type="project" value="ParkinsonsUK-UCL"/>
</dbReference>
<dbReference type="GO" id="GO:0005125">
    <property type="term" value="F:cytokine activity"/>
    <property type="evidence" value="ECO:0000318"/>
    <property type="project" value="GO_Central"/>
</dbReference>
<dbReference type="GO" id="GO:0005109">
    <property type="term" value="F:frizzled binding"/>
    <property type="evidence" value="ECO:0000353"/>
    <property type="project" value="UniProtKB"/>
</dbReference>
<dbReference type="GO" id="GO:0019904">
    <property type="term" value="F:protein domain specific binding"/>
    <property type="evidence" value="ECO:0007669"/>
    <property type="project" value="Ensembl"/>
</dbReference>
<dbReference type="GO" id="GO:0048018">
    <property type="term" value="F:receptor ligand activity"/>
    <property type="evidence" value="ECO:0000314"/>
    <property type="project" value="ParkinsonsUK-UCL"/>
</dbReference>
<dbReference type="GO" id="GO:0009948">
    <property type="term" value="P:anterior/posterior axis specification"/>
    <property type="evidence" value="ECO:0007669"/>
    <property type="project" value="Ensembl"/>
</dbReference>
<dbReference type="GO" id="GO:0007411">
    <property type="term" value="P:axon guidance"/>
    <property type="evidence" value="ECO:0007669"/>
    <property type="project" value="Ensembl"/>
</dbReference>
<dbReference type="GO" id="GO:0060070">
    <property type="term" value="P:canonical Wnt signaling pathway"/>
    <property type="evidence" value="ECO:0000314"/>
    <property type="project" value="UniProtKB"/>
</dbReference>
<dbReference type="GO" id="GO:0045165">
    <property type="term" value="P:cell fate commitment"/>
    <property type="evidence" value="ECO:0000318"/>
    <property type="project" value="GO_Central"/>
</dbReference>
<dbReference type="GO" id="GO:0000902">
    <property type="term" value="P:cell morphogenesis"/>
    <property type="evidence" value="ECO:0000315"/>
    <property type="project" value="BHF-UCL"/>
</dbReference>
<dbReference type="GO" id="GO:0071300">
    <property type="term" value="P:cellular response to retinoic acid"/>
    <property type="evidence" value="ECO:0000250"/>
    <property type="project" value="UniProtKB"/>
</dbReference>
<dbReference type="GO" id="GO:0009950">
    <property type="term" value="P:dorsal/ventral axis specification"/>
    <property type="evidence" value="ECO:0007669"/>
    <property type="project" value="Ensembl"/>
</dbReference>
<dbReference type="GO" id="GO:0035115">
    <property type="term" value="P:embryonic forelimb morphogenesis"/>
    <property type="evidence" value="ECO:0007669"/>
    <property type="project" value="Ensembl"/>
</dbReference>
<dbReference type="GO" id="GO:0035116">
    <property type="term" value="P:embryonic hindlimb morphogenesis"/>
    <property type="evidence" value="ECO:0007669"/>
    <property type="project" value="Ensembl"/>
</dbReference>
<dbReference type="GO" id="GO:0007276">
    <property type="term" value="P:gamete generation"/>
    <property type="evidence" value="ECO:0007669"/>
    <property type="project" value="Ensembl"/>
</dbReference>
<dbReference type="GO" id="GO:0010467">
    <property type="term" value="P:gene expression"/>
    <property type="evidence" value="ECO:0007669"/>
    <property type="project" value="Ensembl"/>
</dbReference>
<dbReference type="GO" id="GO:0060323">
    <property type="term" value="P:head morphogenesis"/>
    <property type="evidence" value="ECO:0007669"/>
    <property type="project" value="Ensembl"/>
</dbReference>
<dbReference type="GO" id="GO:0060174">
    <property type="term" value="P:limb bud formation"/>
    <property type="evidence" value="ECO:0000315"/>
    <property type="project" value="BHF-UCL"/>
</dbReference>
<dbReference type="GO" id="GO:0061180">
    <property type="term" value="P:mammary gland epithelium development"/>
    <property type="evidence" value="ECO:0000270"/>
    <property type="project" value="UniProtKB"/>
</dbReference>
<dbReference type="GO" id="GO:0001707">
    <property type="term" value="P:mesoderm formation"/>
    <property type="evidence" value="ECO:0007669"/>
    <property type="project" value="Ensembl"/>
</dbReference>
<dbReference type="GO" id="GO:1904948">
    <property type="term" value="P:midbrain dopaminergic neuron differentiation"/>
    <property type="evidence" value="ECO:0000315"/>
    <property type="project" value="ParkinsonsUK-UCL"/>
</dbReference>
<dbReference type="GO" id="GO:0048843">
    <property type="term" value="P:negative regulation of axon extension involved in axon guidance"/>
    <property type="evidence" value="ECO:0007669"/>
    <property type="project" value="Ensembl"/>
</dbReference>
<dbReference type="GO" id="GO:0030182">
    <property type="term" value="P:neuron differentiation"/>
    <property type="evidence" value="ECO:0000250"/>
    <property type="project" value="UniProtKB"/>
</dbReference>
<dbReference type="GO" id="GO:0048697">
    <property type="term" value="P:positive regulation of collateral sprouting in absence of injury"/>
    <property type="evidence" value="ECO:0007669"/>
    <property type="project" value="Ensembl"/>
</dbReference>
<dbReference type="GO" id="GO:0010628">
    <property type="term" value="P:positive regulation of gene expression"/>
    <property type="evidence" value="ECO:0000314"/>
    <property type="project" value="ParkinsonsUK-UCL"/>
</dbReference>
<dbReference type="GO" id="GO:0045669">
    <property type="term" value="P:positive regulation of osteoblast differentiation"/>
    <property type="evidence" value="ECO:0000315"/>
    <property type="project" value="BHF-UCL"/>
</dbReference>
<dbReference type="GO" id="GO:0030177">
    <property type="term" value="P:positive regulation of Wnt signaling pathway"/>
    <property type="evidence" value="ECO:0007669"/>
    <property type="project" value="Ensembl"/>
</dbReference>
<dbReference type="GO" id="GO:2000739">
    <property type="term" value="P:regulation of mesenchymal stem cell differentiation"/>
    <property type="evidence" value="ECO:0000315"/>
    <property type="project" value="BHF-UCL"/>
</dbReference>
<dbReference type="GO" id="GO:0050767">
    <property type="term" value="P:regulation of neurogenesis"/>
    <property type="evidence" value="ECO:0000315"/>
    <property type="project" value="ParkinsonsUK-UCL"/>
</dbReference>
<dbReference type="GO" id="GO:0060064">
    <property type="term" value="P:Spemann organizer formation at the anterior end of the primitive streak"/>
    <property type="evidence" value="ECO:0007669"/>
    <property type="project" value="Ensembl"/>
</dbReference>
<dbReference type="GO" id="GO:0072089">
    <property type="term" value="P:stem cell proliferation"/>
    <property type="evidence" value="ECO:0000315"/>
    <property type="project" value="ParkinsonsUK-UCL"/>
</dbReference>
<dbReference type="CDD" id="cd19335">
    <property type="entry name" value="Wnt_Wnt3_Wnt3a"/>
    <property type="match status" value="1"/>
</dbReference>
<dbReference type="FunFam" id="3.30.2460.20:FF:000009">
    <property type="entry name" value="Protein Wnt-3a"/>
    <property type="match status" value="1"/>
</dbReference>
<dbReference type="Gene3D" id="3.30.2460.20">
    <property type="match status" value="1"/>
</dbReference>
<dbReference type="InterPro" id="IPR005817">
    <property type="entry name" value="Wnt"/>
</dbReference>
<dbReference type="InterPro" id="IPR009141">
    <property type="entry name" value="Wnt3"/>
</dbReference>
<dbReference type="InterPro" id="IPR043158">
    <property type="entry name" value="Wnt_C"/>
</dbReference>
<dbReference type="InterPro" id="IPR018161">
    <property type="entry name" value="Wnt_CS"/>
</dbReference>
<dbReference type="PANTHER" id="PTHR12027:SF82">
    <property type="entry name" value="PROTO-ONCOGENE WNT-3"/>
    <property type="match status" value="1"/>
</dbReference>
<dbReference type="PANTHER" id="PTHR12027">
    <property type="entry name" value="WNT RELATED"/>
    <property type="match status" value="1"/>
</dbReference>
<dbReference type="Pfam" id="PF00110">
    <property type="entry name" value="wnt"/>
    <property type="match status" value="1"/>
</dbReference>
<dbReference type="PRINTS" id="PR01843">
    <property type="entry name" value="WNT3PROTEIN"/>
</dbReference>
<dbReference type="PRINTS" id="PR01349">
    <property type="entry name" value="WNTPROTEIN"/>
</dbReference>
<dbReference type="SMART" id="SM00097">
    <property type="entry name" value="WNT1"/>
    <property type="match status" value="1"/>
</dbReference>
<dbReference type="PROSITE" id="PS00246">
    <property type="entry name" value="WNT1"/>
    <property type="match status" value="1"/>
</dbReference>